<accession>A0A348HAX6</accession>
<comment type="function">
    <text evidence="5 9">Highly reducing polyketide synthase; part of the gene cluster that mediates the biosynthesis of the antihypercholesterolemic agents phomoidrides which are dimeric anhydrides (PubMed:26558485). The pathway begins with the highly reducing polyketide synthase phiA that catalyzes the formation of a C12-fatty acyl-ACP, starting from one acetate and 5 malonate units (PubMed:26558485). The hydrolase phiM is involved in the release of the C12-fatty acyl chain from phiA. The alkylcitrate synthase (ACS) phiJ and the alkylcitrate dehydratase (ACDH) phiI then give rise to decarboxylated monomeric anhydrides by coupling the C12-fatty acyl chain with oxalacetic acid. The cyclase phiC is responsible for the dimerization of the monomeric anhydrides which leads to the production of prephomoidride that contains the characteristic bicyclo[4.3.1]deca-1,6-diene system of phomoidrides. Iterative oxidation catalyzed by the alpha-ketoglutarate-dependent dioxygenase phiK produced then phomoidride A. Finally, the methyltransferase phiE converts phomoidride A to phomoidride B via an acetalization reaction. The phosphatidylethanolamine-binding protein phiB and phiN are not essential for dimerization and their functions have still to be determined (Probable).</text>
</comment>
<comment type="cofactor">
    <cofactor evidence="2">
        <name>pantetheine 4'-phosphate</name>
        <dbReference type="ChEBI" id="CHEBI:47942"/>
    </cofactor>
</comment>
<comment type="pathway">
    <text evidence="5">Secondary metabolite biosynthesis.</text>
</comment>
<comment type="induction">
    <text evidence="5">expression is induced under low pH conditions.</text>
</comment>
<comment type="domain">
    <text evidence="8">Multidomain protein; including a ketosynthase (KS) that catalyzes repeated decarboxylative condensation to elongate the polyketide backbone; a malonyl-CoA:ACP transacylase (MAT) that selects and transfers the extender unit malonyl-CoA; a dehydratase (DH) domain that reduces hydroxyl groups to enoyl groups; a methyltransferase (CMeT) domain responsible for the incorporation of methyl groups; an enoylreductase (ER) domain that reduces enoyl groups to alkyl group; a ketoreductase (KR) domain that catalyzes beta-ketoreduction steps; and an acyl-carrier protein (ACP) that serves as the tether of the growing and completed polyketide via its phosphopantetheinyl arm. Involvement of a non methylated polyketide intermediate in the biosynthesis of phomoidride suggests that the cMET domain in phiA may be inactive.</text>
</comment>
<comment type="biotechnology">
    <text evidence="6">Phomoidrides A and B (also known as CP-225,917 and CP-263,114) are potent inhibitors of Ras farnesyltransferase and squalene synthase (PubMed:9066758). CP-225,917 and CP-263,114 inhibit Ras farnesyl transferase from rat brain with IC(50) values of 6 uM and 20 uoM, respectively (PubMed:9066758). CP-225,917 inhibits squalene synthase with an IC(50) value of 43 uM and CP-263,114 with an IC(50) of 160 uM (PubMed:9066758).</text>
</comment>
<sequence>MSPFMEPQDEIMPIAVVGMSFRGPGDATNVENLLKMVAEGRESRSKIPKHKWNHEAFYHPDPSRYGSHNVEYGHWFQQDVTRFDAPFFNMTAAEAAALDPQQRMLLECTYEAMENSGTHMPNFVGTETSVFVGSFCTDYADVLWRDPETVPMYQCTNAGHSRANTANRISYSYDLKGPSVTVDTACSASLVALHLGCQSLLTGDAKQAIVAGSSAILSHEGMVTMSMMRLLSHEGRCYTFDERANGYARGDGVGVIFLKPLQDAVEAGDTIRAVIRGTGSNQDGKTPGITMPNGLAQEALIRHVYDRSGLDPLDTSYVECHGTGTQAGDTTETGALSRVFSPGRDEDDPLTIGSVKTNVGHLEGASGVTGVIKTILMLENSIILPNRNFQKANPRIPLKDWKLRVPIAIEPWSRPKPLRASVNSFGYGGANAHVIIESARDYLLSHGYDPSQAIRKSSLAVAPIQRAIAQCGPTRSGDDGIENGLSKSVNGNINGVNGIDAHEEDRARVFTLSAFDQAAGKGWVAALTEYLKQRRHIADEAFLDSLTYTLNERRTIHPWKATVIARSVDDLCVRLEGVHFVNVNPKQNLGFVFTGQGAQWCGMGKELIAIYPRFRKSLVACAAALERLGAPFDLLAEFEKDSKDSQINRALYSQPLCTALQIALVDLLGSWGIRPASVTGHSSGEIASAYTAGALSIEDAMLVSYSRGVASNDLASKGLTDGSMVAVGMSKEEALPILSSLSSGKAGVACSNSPSSITVSGDRAAIEELQAILEEKKIFNRKLVVEVAYHSHHMALVADQYRIAMSNIEVLKGNGIKFFSSVTGEQADISTLGPDYWVSNMVGEVKFNQSLHRLSSESGASTTASRKRNKLSPVHTLVEIGPHSALAGPIKQILQADDKLAKASIDYHTALARKKDAVESVLGLVSGLFVSGYSVDLSGINKLTMTKCSPLIDLPPYSWNHANSYSAESRISKFYRDRTFPRVDLLGVLERNSSSLEPRWRNHIRLSEIPWVHDHKIQSNIVYPAAGYITMAVEAAYQRAVQRSVTKIIGYRLREVVIGSALVVPENLGEVEVAITLKSFSESVKTPSDLWDEFVISSVTSDSRWTEHCRGLISVQTPQKSSNLVDGPAQEEADKKLYAELIKKYENNCRKEIDVSQFYDELTALGLEYGPTFANLRHLRSAPGECIGKIEIPDTAAVMPMQFQYPFVIHPATFDSFLHTIFVALAAQLGNLNDPAVPVSVDEVFIAHDISKKPGDVLNTYTSTSQKDYRYMSASIAVFGGTHEPANKPVVEIHDLTCATLERDGGGEADDEVPSRAYNLKWGPDVDLLSVDQLTKMCAAPPPPNAAFIRSKLERAAFYYLHSAVAAMSKASTPSAESDEYRQTLRGFLSSQVEFAMTKHHDHGWSSASESEKASLIEEVRASSGVGRTLCYAGEQLAKVVAGESSPSDLVQGLDFNAFVEDPHLFQNTRSAATYLDLVGHKNPNLSILTIGPQSGLASLGLLSLLSELEGSTPRFTAFHHTDSELNITDTVKEKFSAWANLIEFKDLAIHSDQSEENEVYDVVVAFHVLGSSNSLPETFSSSRRLLKPGGKLLLVGRALKSLVATVLWGSLPNVLSNQKHNEEISTSNVENLIQGSGFSISAALSSSTNKTNYGALFLSLVDEKPRKTHEKKALIIAEKDITGATLEQLRSQLSQSCIEVDVVSLQDARPTSQQACIILSEISSKVLADPSKSEWEAIKRLSLQSAGMIWVTNGAGSSLNPEANMAAGLLRTIRSETGDKPIITLDLEDLDGSVEYIMALFRHVFQSAVSPGEIDAEYTERSGILNIPRLVEDAQLTKHIGTSLQSKAAEIQPFDQPGRPLRMYVGTPGLLDTLHFTEDDRLEEDLPDDWVEMQIKASGINFKDVMMAMGQIKVENLGWECSGILTAVGKHVKGLKIGDRVVCHGSGTFATHSRGPAANAMKIPDNVTFETAAALPVTYVTAYHSIHNVARLQPGETILVHAATGGLGQAIVELCKLVGAEIFVTVGTPEKKRFVQEHFHIPEDHILWSRDNSFAKAVKRLTNGKGVDVVMNSLAGELLRLSWECIAPYGRFVELGQRDITVNSRLEMSHFARNASFTAFNLAYMVQYNPEVANDVFARVLHLFAQGAVKGPSPVEVYPFSQMEAAFRRMQTGGHMGKLVAVSRPGDMVKVIAQDKSKNMFRPDASYLLVGGLGGIGRATSQWMVQHGAKNIIFVNRSGLKTDEAKETVRVLDEAGCATTVFSCDITDAPSVEAFAEEAARSLPPIRGVIQGAMLLRDTMFEKMTLDDYRTVIRPKVHGTWNLHNFLPKDMDFFVMESSVSGIIGNTAQAAYAAGNTFLDAFASYRNSLGLPATTLDLGAISGVGYLAKNDELKQAMERQGFEFTDEKRLMRLIQFAIQNPRREGNLSHVITGLGTWQESNSLGALNTPMFSHFRRLASSGASSDNSANNLRKVLKESKTFDAASEAICDALVDKIASRSGLPIENVSTAKSMPDYGIDSLVAVELRNWIAKEMDSTIPILELMASDPLTGLAAKIAKRSRLVNVESGEDA</sequence>
<evidence type="ECO:0000255" key="1"/>
<evidence type="ECO:0000255" key="2">
    <source>
        <dbReference type="PROSITE-ProRule" id="PRU00258"/>
    </source>
</evidence>
<evidence type="ECO:0000255" key="3">
    <source>
        <dbReference type="PROSITE-ProRule" id="PRU01348"/>
    </source>
</evidence>
<evidence type="ECO:0000255" key="4">
    <source>
        <dbReference type="PROSITE-ProRule" id="PRU01363"/>
    </source>
</evidence>
<evidence type="ECO:0000269" key="5">
    <source>
    </source>
</evidence>
<evidence type="ECO:0000269" key="6">
    <source>
    </source>
</evidence>
<evidence type="ECO:0000303" key="7">
    <source>
    </source>
</evidence>
<evidence type="ECO:0000305" key="8">
    <source>
    </source>
</evidence>
<evidence type="ECO:0000305" key="9">
    <source>
    </source>
</evidence>
<reference key="1">
    <citation type="journal article" date="2015" name="Org. Lett.">
        <title>Biosynthetic study on antihypercholesterolemic agent phomoidride: general biogenesis of fungal dimeric anhydrides.</title>
        <authorList>
            <person name="Fujii R."/>
            <person name="Matsu Y."/>
            <person name="Minami A."/>
            <person name="Nagamine S."/>
            <person name="Takeuchi I."/>
            <person name="Gomi K."/>
            <person name="Oikawa H."/>
        </authorList>
    </citation>
    <scope>NUCLEOTIDE SEQUENCE [GENOMIC DNA]</scope>
    <scope>INDUCTION</scope>
    <scope>FUNCTION</scope>
    <scope>CATALYTIC ACTIVITY</scope>
    <scope>PATHWAY</scope>
    <source>
        <strain>ATCC 74256</strain>
    </source>
</reference>
<reference key="2">
    <citation type="journal article" date="1997" name="J. Antibiot.">
        <title>CP-225,917 and CP-263,114, novel Ras farnesylation inhibitors from an unidentified fungus. I. Taxonomy, fermentation, isolation, and biochemical properties.</title>
        <authorList>
            <person name="Dabrah T.T."/>
            <person name="Harwood H.J. Jr."/>
            <person name="Huang L.H."/>
            <person name="Jankovich N.D."/>
            <person name="Kaneko T."/>
            <person name="Li J.C."/>
            <person name="Lindsey S."/>
            <person name="Moshier P.M."/>
            <person name="Subashi T.A."/>
            <person name="Therrien M."/>
            <person name="Watts P.C."/>
        </authorList>
    </citation>
    <scope>BIOTECHNOLOGY</scope>
</reference>
<reference key="3">
    <citation type="journal article" date="2022" name="J. Am. Chem. Soc.">
        <title>Elucidation of late-stage biosynthesis of phomoidride: proposal of cyclization mechanism affording characteristic nine-membered ring of fungal dimeric anhydride.</title>
        <authorList>
            <person name="Yamamoto S."/>
            <person name="Matsuyama T."/>
            <person name="Ozaki T."/>
            <person name="Takino J."/>
            <person name="Sato H."/>
            <person name="Uchiyama M."/>
            <person name="Minami A."/>
            <person name="Oikawa H."/>
        </authorList>
    </citation>
    <scope>FUNCTION</scope>
</reference>
<dbReference type="EC" id="2.3.1.-" evidence="5"/>
<dbReference type="EMBL" id="LC086931">
    <property type="protein sequence ID" value="BBG28498.1"/>
    <property type="molecule type" value="Genomic_DNA"/>
</dbReference>
<dbReference type="SMR" id="A0A348HAX6"/>
<dbReference type="GO" id="GO:0004315">
    <property type="term" value="F:3-oxoacyl-[acyl-carrier-protein] synthase activity"/>
    <property type="evidence" value="ECO:0007669"/>
    <property type="project" value="InterPro"/>
</dbReference>
<dbReference type="GO" id="GO:0004312">
    <property type="term" value="F:fatty acid synthase activity"/>
    <property type="evidence" value="ECO:0007669"/>
    <property type="project" value="TreeGrafter"/>
</dbReference>
<dbReference type="GO" id="GO:0016491">
    <property type="term" value="F:oxidoreductase activity"/>
    <property type="evidence" value="ECO:0007669"/>
    <property type="project" value="UniProtKB-KW"/>
</dbReference>
<dbReference type="GO" id="GO:0031177">
    <property type="term" value="F:phosphopantetheine binding"/>
    <property type="evidence" value="ECO:0007669"/>
    <property type="project" value="InterPro"/>
</dbReference>
<dbReference type="GO" id="GO:0006633">
    <property type="term" value="P:fatty acid biosynthetic process"/>
    <property type="evidence" value="ECO:0007669"/>
    <property type="project" value="InterPro"/>
</dbReference>
<dbReference type="GO" id="GO:0030639">
    <property type="term" value="P:polyketide biosynthetic process"/>
    <property type="evidence" value="ECO:0007669"/>
    <property type="project" value="UniProtKB-ARBA"/>
</dbReference>
<dbReference type="CDD" id="cd05195">
    <property type="entry name" value="enoyl_red"/>
    <property type="match status" value="1"/>
</dbReference>
<dbReference type="CDD" id="cd00833">
    <property type="entry name" value="PKS"/>
    <property type="match status" value="1"/>
</dbReference>
<dbReference type="FunFam" id="3.40.50.720:FF:000209">
    <property type="entry name" value="Polyketide synthase Pks12"/>
    <property type="match status" value="1"/>
</dbReference>
<dbReference type="Gene3D" id="3.30.70.3290">
    <property type="match status" value="1"/>
</dbReference>
<dbReference type="Gene3D" id="3.40.47.10">
    <property type="match status" value="1"/>
</dbReference>
<dbReference type="Gene3D" id="1.10.1200.10">
    <property type="entry name" value="ACP-like"/>
    <property type="match status" value="1"/>
</dbReference>
<dbReference type="Gene3D" id="3.40.366.10">
    <property type="entry name" value="Malonyl-Coenzyme A Acyl Carrier Protein, domain 2"/>
    <property type="match status" value="1"/>
</dbReference>
<dbReference type="Gene3D" id="3.90.180.10">
    <property type="entry name" value="Medium-chain alcohol dehydrogenases, catalytic domain"/>
    <property type="match status" value="1"/>
</dbReference>
<dbReference type="Gene3D" id="3.40.50.720">
    <property type="entry name" value="NAD(P)-binding Rossmann-like Domain"/>
    <property type="match status" value="1"/>
</dbReference>
<dbReference type="Gene3D" id="3.10.129.110">
    <property type="entry name" value="Polyketide synthase dehydratase"/>
    <property type="match status" value="1"/>
</dbReference>
<dbReference type="Gene3D" id="3.40.50.150">
    <property type="entry name" value="Vaccinia Virus protein VP39"/>
    <property type="match status" value="1"/>
</dbReference>
<dbReference type="InterPro" id="IPR001227">
    <property type="entry name" value="Ac_transferase_dom_sf"/>
</dbReference>
<dbReference type="InterPro" id="IPR036736">
    <property type="entry name" value="ACP-like_sf"/>
</dbReference>
<dbReference type="InterPro" id="IPR014043">
    <property type="entry name" value="Acyl_transferase_dom"/>
</dbReference>
<dbReference type="InterPro" id="IPR016035">
    <property type="entry name" value="Acyl_Trfase/lysoPLipase"/>
</dbReference>
<dbReference type="InterPro" id="IPR013154">
    <property type="entry name" value="ADH-like_N"/>
</dbReference>
<dbReference type="InterPro" id="IPR011032">
    <property type="entry name" value="GroES-like_sf"/>
</dbReference>
<dbReference type="InterPro" id="IPR018201">
    <property type="entry name" value="Ketoacyl_synth_AS"/>
</dbReference>
<dbReference type="InterPro" id="IPR014031">
    <property type="entry name" value="Ketoacyl_synth_C"/>
</dbReference>
<dbReference type="InterPro" id="IPR014030">
    <property type="entry name" value="Ketoacyl_synth_N"/>
</dbReference>
<dbReference type="InterPro" id="IPR016036">
    <property type="entry name" value="Malonyl_transacylase_ACP-bd"/>
</dbReference>
<dbReference type="InterPro" id="IPR036291">
    <property type="entry name" value="NAD(P)-bd_dom_sf"/>
</dbReference>
<dbReference type="InterPro" id="IPR056501">
    <property type="entry name" value="NAD-bd_HRPKS_sdrA"/>
</dbReference>
<dbReference type="InterPro" id="IPR032821">
    <property type="entry name" value="PKS_assoc"/>
</dbReference>
<dbReference type="InterPro" id="IPR020841">
    <property type="entry name" value="PKS_Beta-ketoAc_synthase_dom"/>
</dbReference>
<dbReference type="InterPro" id="IPR042104">
    <property type="entry name" value="PKS_dehydratase_sf"/>
</dbReference>
<dbReference type="InterPro" id="IPR020807">
    <property type="entry name" value="PKS_DH"/>
</dbReference>
<dbReference type="InterPro" id="IPR049551">
    <property type="entry name" value="PKS_DH_C"/>
</dbReference>
<dbReference type="InterPro" id="IPR049552">
    <property type="entry name" value="PKS_DH_N"/>
</dbReference>
<dbReference type="InterPro" id="IPR020843">
    <property type="entry name" value="PKS_ER"/>
</dbReference>
<dbReference type="InterPro" id="IPR013968">
    <property type="entry name" value="PKS_KR"/>
</dbReference>
<dbReference type="InterPro" id="IPR049900">
    <property type="entry name" value="PKS_mFAS_DH"/>
</dbReference>
<dbReference type="InterPro" id="IPR050091">
    <property type="entry name" value="PKS_NRPS_Biosynth_Enz"/>
</dbReference>
<dbReference type="InterPro" id="IPR020806">
    <property type="entry name" value="PKS_PP-bd"/>
</dbReference>
<dbReference type="InterPro" id="IPR009081">
    <property type="entry name" value="PP-bd_ACP"/>
</dbReference>
<dbReference type="InterPro" id="IPR006162">
    <property type="entry name" value="Ppantetheine_attach_site"/>
</dbReference>
<dbReference type="InterPro" id="IPR029063">
    <property type="entry name" value="SAM-dependent_MTases_sf"/>
</dbReference>
<dbReference type="InterPro" id="IPR016039">
    <property type="entry name" value="Thiolase-like"/>
</dbReference>
<dbReference type="PANTHER" id="PTHR43775:SF29">
    <property type="entry name" value="ASPERFURANONE POLYKETIDE SYNTHASE AFOG-RELATED"/>
    <property type="match status" value="1"/>
</dbReference>
<dbReference type="PANTHER" id="PTHR43775">
    <property type="entry name" value="FATTY ACID SYNTHASE"/>
    <property type="match status" value="1"/>
</dbReference>
<dbReference type="Pfam" id="PF23297">
    <property type="entry name" value="ACP_SdgA_C"/>
    <property type="match status" value="1"/>
</dbReference>
<dbReference type="Pfam" id="PF00698">
    <property type="entry name" value="Acyl_transf_1"/>
    <property type="match status" value="1"/>
</dbReference>
<dbReference type="Pfam" id="PF08240">
    <property type="entry name" value="ADH_N"/>
    <property type="match status" value="1"/>
</dbReference>
<dbReference type="Pfam" id="PF13602">
    <property type="entry name" value="ADH_zinc_N_2"/>
    <property type="match status" value="1"/>
</dbReference>
<dbReference type="Pfam" id="PF16197">
    <property type="entry name" value="KAsynt_C_assoc"/>
    <property type="match status" value="1"/>
</dbReference>
<dbReference type="Pfam" id="PF00109">
    <property type="entry name" value="ketoacyl-synt"/>
    <property type="match status" value="1"/>
</dbReference>
<dbReference type="Pfam" id="PF02801">
    <property type="entry name" value="Ketoacyl-synt_C"/>
    <property type="match status" value="1"/>
</dbReference>
<dbReference type="Pfam" id="PF08659">
    <property type="entry name" value="KR"/>
    <property type="match status" value="1"/>
</dbReference>
<dbReference type="Pfam" id="PF13489">
    <property type="entry name" value="Methyltransf_23"/>
    <property type="match status" value="1"/>
</dbReference>
<dbReference type="Pfam" id="PF23114">
    <property type="entry name" value="NAD-bd_HRPKS_sdrA"/>
    <property type="match status" value="1"/>
</dbReference>
<dbReference type="Pfam" id="PF21089">
    <property type="entry name" value="PKS_DH_N"/>
    <property type="match status" value="1"/>
</dbReference>
<dbReference type="Pfam" id="PF14765">
    <property type="entry name" value="PS-DH"/>
    <property type="match status" value="1"/>
</dbReference>
<dbReference type="SMART" id="SM00827">
    <property type="entry name" value="PKS_AT"/>
    <property type="match status" value="1"/>
</dbReference>
<dbReference type="SMART" id="SM00826">
    <property type="entry name" value="PKS_DH"/>
    <property type="match status" value="1"/>
</dbReference>
<dbReference type="SMART" id="SM00829">
    <property type="entry name" value="PKS_ER"/>
    <property type="match status" value="1"/>
</dbReference>
<dbReference type="SMART" id="SM00822">
    <property type="entry name" value="PKS_KR"/>
    <property type="match status" value="1"/>
</dbReference>
<dbReference type="SMART" id="SM00825">
    <property type="entry name" value="PKS_KS"/>
    <property type="match status" value="1"/>
</dbReference>
<dbReference type="SMART" id="SM00823">
    <property type="entry name" value="PKS_PP"/>
    <property type="match status" value="1"/>
</dbReference>
<dbReference type="SUPFAM" id="SSF47336">
    <property type="entry name" value="ACP-like"/>
    <property type="match status" value="1"/>
</dbReference>
<dbReference type="SUPFAM" id="SSF52151">
    <property type="entry name" value="FabD/lysophospholipase-like"/>
    <property type="match status" value="1"/>
</dbReference>
<dbReference type="SUPFAM" id="SSF50129">
    <property type="entry name" value="GroES-like"/>
    <property type="match status" value="1"/>
</dbReference>
<dbReference type="SUPFAM" id="SSF51735">
    <property type="entry name" value="NAD(P)-binding Rossmann-fold domains"/>
    <property type="match status" value="2"/>
</dbReference>
<dbReference type="SUPFAM" id="SSF55048">
    <property type="entry name" value="Probable ACP-binding domain of malonyl-CoA ACP transacylase"/>
    <property type="match status" value="1"/>
</dbReference>
<dbReference type="SUPFAM" id="SSF53335">
    <property type="entry name" value="S-adenosyl-L-methionine-dependent methyltransferases"/>
    <property type="match status" value="1"/>
</dbReference>
<dbReference type="SUPFAM" id="SSF53901">
    <property type="entry name" value="Thiolase-like"/>
    <property type="match status" value="1"/>
</dbReference>
<dbReference type="PROSITE" id="PS50075">
    <property type="entry name" value="CARRIER"/>
    <property type="match status" value="1"/>
</dbReference>
<dbReference type="PROSITE" id="PS01121">
    <property type="entry name" value="CASPASE_HIS"/>
    <property type="match status" value="1"/>
</dbReference>
<dbReference type="PROSITE" id="PS00606">
    <property type="entry name" value="KS3_1"/>
    <property type="match status" value="1"/>
</dbReference>
<dbReference type="PROSITE" id="PS52004">
    <property type="entry name" value="KS3_2"/>
    <property type="match status" value="1"/>
</dbReference>
<dbReference type="PROSITE" id="PS00012">
    <property type="entry name" value="PHOSPHOPANTETHEINE"/>
    <property type="match status" value="1"/>
</dbReference>
<dbReference type="PROSITE" id="PS52019">
    <property type="entry name" value="PKS_MFAS_DH"/>
    <property type="match status" value="1"/>
</dbReference>
<keyword id="KW-0012">Acyltransferase</keyword>
<keyword id="KW-0511">Multifunctional enzyme</keyword>
<keyword id="KW-0521">NADP</keyword>
<keyword id="KW-0560">Oxidoreductase</keyword>
<keyword id="KW-0596">Phosphopantetheine</keyword>
<keyword id="KW-0597">Phosphoprotein</keyword>
<keyword id="KW-0808">Transferase</keyword>
<name>PHIA_FUNX7</name>
<feature type="chain" id="PRO_0000458942" description="Highly reducing polyketide synthase phiA">
    <location>
        <begin position="1"/>
        <end position="2572"/>
    </location>
</feature>
<feature type="domain" description="Ketosynthase family 3 (KS3)" evidence="3 8">
    <location>
        <begin position="11"/>
        <end position="438"/>
    </location>
</feature>
<feature type="domain" description="Malonyl-CoA:ACP transacylase (MAT)" evidence="1 8">
    <location>
        <begin position="591"/>
        <end position="917"/>
    </location>
</feature>
<feature type="domain" description="PKS/mFAS DH" evidence="4 8">
    <location>
        <begin position="983"/>
        <end position="1307"/>
    </location>
</feature>
<feature type="domain" description="Enoyl reductase (ER)" evidence="1 8">
    <location>
        <begin position="1870"/>
        <end position="2182"/>
    </location>
</feature>
<feature type="domain" description="Ketoreductase (KR)" evidence="1 8">
    <location>
        <begin position="2206"/>
        <end position="2383"/>
    </location>
</feature>
<feature type="domain" description="Carrier" evidence="2 8">
    <location>
        <begin position="2484"/>
        <end position="2561"/>
    </location>
</feature>
<feature type="region of interest" description="N-terminal hotdog fold" evidence="4">
    <location>
        <begin position="983"/>
        <end position="1120"/>
    </location>
</feature>
<feature type="region of interest" description="C-terminal hotdog fold" evidence="4">
    <location>
        <begin position="1150"/>
        <end position="1307"/>
    </location>
</feature>
<feature type="region of interest" description="Methyltransferase (CMeT) domain" evidence="1 8">
    <location>
        <begin position="1353"/>
        <end position="1654"/>
    </location>
</feature>
<feature type="active site" description="For beta-ketoacyl synthase activity" evidence="3">
    <location>
        <position position="186"/>
    </location>
</feature>
<feature type="active site" description="For beta-ketoacyl synthase activity" evidence="3">
    <location>
        <position position="321"/>
    </location>
</feature>
<feature type="active site" description="For beta-ketoacyl synthase activity" evidence="3">
    <location>
        <position position="361"/>
    </location>
</feature>
<feature type="active site" description="Proton acceptor; for dehydratase activity" evidence="4">
    <location>
        <position position="1015"/>
    </location>
</feature>
<feature type="active site" description="Proton donor; for dehydratase activity" evidence="4">
    <location>
        <position position="1215"/>
    </location>
</feature>
<feature type="modified residue" description="O-(pantetheine 4'-phosphoryl)serine" evidence="2">
    <location>
        <position position="2521"/>
    </location>
</feature>
<gene>
    <name evidence="7" type="primary">phiA</name>
</gene>
<proteinExistence type="evidence at protein level"/>
<organism>
    <name type="scientific">Fungal sp. (strain ATCC 74256)</name>
    <dbReference type="NCBI Taxonomy" id="1729595"/>
    <lineage>
        <taxon>Eukaryota</taxon>
        <taxon>Fungi</taxon>
    </lineage>
</organism>
<protein>
    <recommendedName>
        <fullName evidence="7">Highly reducing polyketide synthase phiA</fullName>
        <shortName evidence="7">HR-PKS phiA</shortName>
        <ecNumber evidence="5">2.3.1.-</ecNumber>
    </recommendedName>
    <alternativeName>
        <fullName evidence="7">Phomoidride biosynthesis cluster protein A</fullName>
    </alternativeName>
</protein>